<reference key="1">
    <citation type="journal article" date="2004" name="Proc. Natl. Acad. Sci. U.S.A.">
        <title>Genome sequence of the enterobacterial phytopathogen Erwinia carotovora subsp. atroseptica and characterization of virulence factors.</title>
        <authorList>
            <person name="Bell K.S."/>
            <person name="Sebaihia M."/>
            <person name="Pritchard L."/>
            <person name="Holden M.T.G."/>
            <person name="Hyman L.J."/>
            <person name="Holeva M.C."/>
            <person name="Thomson N.R."/>
            <person name="Bentley S.D."/>
            <person name="Churcher L.J.C."/>
            <person name="Mungall K."/>
            <person name="Atkin R."/>
            <person name="Bason N."/>
            <person name="Brooks K."/>
            <person name="Chillingworth T."/>
            <person name="Clark K."/>
            <person name="Doggett J."/>
            <person name="Fraser A."/>
            <person name="Hance Z."/>
            <person name="Hauser H."/>
            <person name="Jagels K."/>
            <person name="Moule S."/>
            <person name="Norbertczak H."/>
            <person name="Ormond D."/>
            <person name="Price C."/>
            <person name="Quail M.A."/>
            <person name="Sanders M."/>
            <person name="Walker D."/>
            <person name="Whitehead S."/>
            <person name="Salmond G.P.C."/>
            <person name="Birch P.R.J."/>
            <person name="Parkhill J."/>
            <person name="Toth I.K."/>
        </authorList>
    </citation>
    <scope>NUCLEOTIDE SEQUENCE [LARGE SCALE GENOMIC DNA]</scope>
    <source>
        <strain>SCRI 1043 / ATCC BAA-672</strain>
    </source>
</reference>
<proteinExistence type="inferred from homology"/>
<dbReference type="EC" id="3.5.1.108" evidence="1"/>
<dbReference type="EMBL" id="BX950851">
    <property type="protein sequence ID" value="CAG76708.1"/>
    <property type="status" value="ALT_INIT"/>
    <property type="molecule type" value="Genomic_DNA"/>
</dbReference>
<dbReference type="RefSeq" id="WP_039295256.1">
    <property type="nucleotide sequence ID" value="NC_004547.2"/>
</dbReference>
<dbReference type="SMR" id="Q6D0I9"/>
<dbReference type="STRING" id="218491.ECA3809"/>
<dbReference type="GeneID" id="90772753"/>
<dbReference type="KEGG" id="eca:ECA3809"/>
<dbReference type="eggNOG" id="COG0774">
    <property type="taxonomic scope" value="Bacteria"/>
</dbReference>
<dbReference type="HOGENOM" id="CLU_046528_1_0_6"/>
<dbReference type="OrthoDB" id="9802746at2"/>
<dbReference type="UniPathway" id="UPA00359">
    <property type="reaction ID" value="UER00478"/>
</dbReference>
<dbReference type="Proteomes" id="UP000007966">
    <property type="component" value="Chromosome"/>
</dbReference>
<dbReference type="GO" id="GO:0016020">
    <property type="term" value="C:membrane"/>
    <property type="evidence" value="ECO:0007669"/>
    <property type="project" value="GOC"/>
</dbReference>
<dbReference type="GO" id="GO:0046872">
    <property type="term" value="F:metal ion binding"/>
    <property type="evidence" value="ECO:0007669"/>
    <property type="project" value="UniProtKB-KW"/>
</dbReference>
<dbReference type="GO" id="GO:0103117">
    <property type="term" value="F:UDP-3-O-acyl-N-acetylglucosamine deacetylase activity"/>
    <property type="evidence" value="ECO:0007669"/>
    <property type="project" value="UniProtKB-UniRule"/>
</dbReference>
<dbReference type="GO" id="GO:0009245">
    <property type="term" value="P:lipid A biosynthetic process"/>
    <property type="evidence" value="ECO:0007669"/>
    <property type="project" value="UniProtKB-UniRule"/>
</dbReference>
<dbReference type="FunFam" id="3.30.1700.10:FF:000001">
    <property type="entry name" value="UDP-3-O-acyl-N-acetylglucosamine deacetylase"/>
    <property type="match status" value="1"/>
</dbReference>
<dbReference type="FunFam" id="3.30.230.20:FF:000001">
    <property type="entry name" value="UDP-3-O-acyl-N-acetylglucosamine deacetylase"/>
    <property type="match status" value="1"/>
</dbReference>
<dbReference type="Gene3D" id="3.30.230.20">
    <property type="entry name" value="lpxc deacetylase, domain 1"/>
    <property type="match status" value="1"/>
</dbReference>
<dbReference type="Gene3D" id="3.30.1700.10">
    <property type="entry name" value="lpxc deacetylase, domain 2"/>
    <property type="match status" value="1"/>
</dbReference>
<dbReference type="HAMAP" id="MF_00388">
    <property type="entry name" value="LpxC"/>
    <property type="match status" value="1"/>
</dbReference>
<dbReference type="InterPro" id="IPR020568">
    <property type="entry name" value="Ribosomal_Su5_D2-typ_SF"/>
</dbReference>
<dbReference type="InterPro" id="IPR004463">
    <property type="entry name" value="UDP-acyl_GlcNac_deAcase"/>
</dbReference>
<dbReference type="InterPro" id="IPR011334">
    <property type="entry name" value="UDP-acyl_GlcNac_deAcase_C"/>
</dbReference>
<dbReference type="InterPro" id="IPR015870">
    <property type="entry name" value="UDP-acyl_N-AcGlcN_deAcase_N"/>
</dbReference>
<dbReference type="NCBIfam" id="TIGR00325">
    <property type="entry name" value="lpxC"/>
    <property type="match status" value="1"/>
</dbReference>
<dbReference type="PANTHER" id="PTHR33694">
    <property type="entry name" value="UDP-3-O-ACYL-N-ACETYLGLUCOSAMINE DEACETYLASE 1, MITOCHONDRIAL-RELATED"/>
    <property type="match status" value="1"/>
</dbReference>
<dbReference type="PANTHER" id="PTHR33694:SF1">
    <property type="entry name" value="UDP-3-O-ACYL-N-ACETYLGLUCOSAMINE DEACETYLASE 1, MITOCHONDRIAL-RELATED"/>
    <property type="match status" value="1"/>
</dbReference>
<dbReference type="Pfam" id="PF03331">
    <property type="entry name" value="LpxC"/>
    <property type="match status" value="1"/>
</dbReference>
<dbReference type="SUPFAM" id="SSF54211">
    <property type="entry name" value="Ribosomal protein S5 domain 2-like"/>
    <property type="match status" value="2"/>
</dbReference>
<keyword id="KW-0378">Hydrolase</keyword>
<keyword id="KW-0441">Lipid A biosynthesis</keyword>
<keyword id="KW-0444">Lipid biosynthesis</keyword>
<keyword id="KW-0443">Lipid metabolism</keyword>
<keyword id="KW-0479">Metal-binding</keyword>
<keyword id="KW-1185">Reference proteome</keyword>
<keyword id="KW-0862">Zinc</keyword>
<organism>
    <name type="scientific">Pectobacterium atrosepticum (strain SCRI 1043 / ATCC BAA-672)</name>
    <name type="common">Erwinia carotovora subsp. atroseptica</name>
    <dbReference type="NCBI Taxonomy" id="218491"/>
    <lineage>
        <taxon>Bacteria</taxon>
        <taxon>Pseudomonadati</taxon>
        <taxon>Pseudomonadota</taxon>
        <taxon>Gammaproteobacteria</taxon>
        <taxon>Enterobacterales</taxon>
        <taxon>Pectobacteriaceae</taxon>
        <taxon>Pectobacterium</taxon>
    </lineage>
</organism>
<protein>
    <recommendedName>
        <fullName evidence="1">UDP-3-O-acyl-N-acetylglucosamine deacetylase</fullName>
        <shortName evidence="1">UDP-3-O-acyl-GlcNAc deacetylase</shortName>
        <ecNumber evidence="1">3.5.1.108</ecNumber>
    </recommendedName>
    <alternativeName>
        <fullName evidence="1">UDP-3-O-[R-3-hydroxymyristoyl]-N-acetylglucosamine deacetylase</fullName>
    </alternativeName>
</protein>
<evidence type="ECO:0000255" key="1">
    <source>
        <dbReference type="HAMAP-Rule" id="MF_00388"/>
    </source>
</evidence>
<evidence type="ECO:0000305" key="2"/>
<comment type="function">
    <text evidence="1">Catalyzes the hydrolysis of UDP-3-O-myristoyl-N-acetylglucosamine to form UDP-3-O-myristoylglucosamine and acetate, the committed step in lipid A biosynthesis.</text>
</comment>
<comment type="catalytic activity">
    <reaction evidence="1">
        <text>a UDP-3-O-[(3R)-3-hydroxyacyl]-N-acetyl-alpha-D-glucosamine + H2O = a UDP-3-O-[(3R)-3-hydroxyacyl]-alpha-D-glucosamine + acetate</text>
        <dbReference type="Rhea" id="RHEA:67816"/>
        <dbReference type="ChEBI" id="CHEBI:15377"/>
        <dbReference type="ChEBI" id="CHEBI:30089"/>
        <dbReference type="ChEBI" id="CHEBI:137740"/>
        <dbReference type="ChEBI" id="CHEBI:173225"/>
        <dbReference type="EC" id="3.5.1.108"/>
    </reaction>
</comment>
<comment type="cofactor">
    <cofactor evidence="1">
        <name>Zn(2+)</name>
        <dbReference type="ChEBI" id="CHEBI:29105"/>
    </cofactor>
</comment>
<comment type="pathway">
    <text evidence="1">Glycolipid biosynthesis; lipid IV(A) biosynthesis; lipid IV(A) from (3R)-3-hydroxytetradecanoyl-[acyl-carrier-protein] and UDP-N-acetyl-alpha-D-glucosamine: step 2/6.</text>
</comment>
<comment type="similarity">
    <text evidence="1">Belongs to the LpxC family.</text>
</comment>
<comment type="sequence caution" evidence="2">
    <conflict type="erroneous initiation">
        <sequence resource="EMBL-CDS" id="CAG76708"/>
    </conflict>
</comment>
<gene>
    <name evidence="1" type="primary">lpxC</name>
    <name type="ordered locus">ECA3809</name>
</gene>
<sequence>MIKQRTLKRIVQATGVGLHTGKKVTLTMRPAPANTGVIYRRTDLNPPVDFPADAKSVRDTMLCTCLVNEHDVRISTVEHLNAALAGLGIDNIVIDVDAPEIPIMDGSASPFVYLLLDAGIEELNCAKKFVRIKQSVRVEDGDKWAEMKPFNGFSLDFTIDFNHPAIDAGNQRYRLDFSADAFVRQISRARTFGFMRDIEYLQSRGLCLGGSMDCAIVVDDYRVLNEDGLRFEDEFVRHKMLDAIGDLFMCGHNIIGAFSAFKSGHALNNKLLQAVLANQEAWEYVTFEDEAEMPLAFKAPSIVLA</sequence>
<name>LPXC_PECAS</name>
<accession>Q6D0I9</accession>
<feature type="chain" id="PRO_0000191932" description="UDP-3-O-acyl-N-acetylglucosamine deacetylase">
    <location>
        <begin position="1"/>
        <end position="305"/>
    </location>
</feature>
<feature type="active site" description="Proton donor" evidence="1">
    <location>
        <position position="265"/>
    </location>
</feature>
<feature type="binding site" evidence="1">
    <location>
        <position position="79"/>
    </location>
    <ligand>
        <name>Zn(2+)</name>
        <dbReference type="ChEBI" id="CHEBI:29105"/>
    </ligand>
</feature>
<feature type="binding site" evidence="1">
    <location>
        <position position="238"/>
    </location>
    <ligand>
        <name>Zn(2+)</name>
        <dbReference type="ChEBI" id="CHEBI:29105"/>
    </ligand>
</feature>
<feature type="binding site" evidence="1">
    <location>
        <position position="242"/>
    </location>
    <ligand>
        <name>Zn(2+)</name>
        <dbReference type="ChEBI" id="CHEBI:29105"/>
    </ligand>
</feature>